<dbReference type="EMBL" id="CH954180">
    <property type="protein sequence ID" value="EDV46031.1"/>
    <property type="molecule type" value="Genomic_DNA"/>
</dbReference>
<dbReference type="SMR" id="B3NUB6"/>
<dbReference type="EnsemblMetazoa" id="FBtr0138902">
    <property type="protein sequence ID" value="FBpp0137394"/>
    <property type="gene ID" value="FBgn0111056"/>
</dbReference>
<dbReference type="EnsemblMetazoa" id="XM_001977068.3">
    <property type="protein sequence ID" value="XP_001977104.1"/>
    <property type="gene ID" value="LOC6551090"/>
</dbReference>
<dbReference type="GeneID" id="6551090"/>
<dbReference type="KEGG" id="der:6551090"/>
<dbReference type="CTD" id="45848"/>
<dbReference type="eggNOG" id="KOG4479">
    <property type="taxonomic scope" value="Eukaryota"/>
</dbReference>
<dbReference type="HOGENOM" id="CLU_134052_1_2_1"/>
<dbReference type="OMA" id="RLMCRNI"/>
<dbReference type="OrthoDB" id="6221744at2759"/>
<dbReference type="PhylomeDB" id="B3NUB6"/>
<dbReference type="Proteomes" id="UP000008711">
    <property type="component" value="Unassembled WGS sequence"/>
</dbReference>
<dbReference type="GO" id="GO:0005737">
    <property type="term" value="C:cytoplasm"/>
    <property type="evidence" value="ECO:0007669"/>
    <property type="project" value="UniProtKB-SubCell"/>
</dbReference>
<dbReference type="GO" id="GO:0071819">
    <property type="term" value="C:DUBm complex"/>
    <property type="evidence" value="ECO:0007669"/>
    <property type="project" value="UniProtKB-UniRule"/>
</dbReference>
<dbReference type="GO" id="GO:0034399">
    <property type="term" value="C:nuclear periphery"/>
    <property type="evidence" value="ECO:0007669"/>
    <property type="project" value="EnsemblMetazoa"/>
</dbReference>
<dbReference type="GO" id="GO:0005643">
    <property type="term" value="C:nuclear pore"/>
    <property type="evidence" value="ECO:0000250"/>
    <property type="project" value="UniProtKB"/>
</dbReference>
<dbReference type="GO" id="GO:0005654">
    <property type="term" value="C:nucleoplasm"/>
    <property type="evidence" value="ECO:0007669"/>
    <property type="project" value="UniProtKB-SubCell"/>
</dbReference>
<dbReference type="GO" id="GO:0000124">
    <property type="term" value="C:SAGA complex"/>
    <property type="evidence" value="ECO:0000250"/>
    <property type="project" value="UniProtKB"/>
</dbReference>
<dbReference type="GO" id="GO:0070390">
    <property type="term" value="C:transcription export complex 2"/>
    <property type="evidence" value="ECO:0007669"/>
    <property type="project" value="UniProtKB-UniRule"/>
</dbReference>
<dbReference type="GO" id="GO:0070742">
    <property type="term" value="F:C2H2 zinc finger domain binding"/>
    <property type="evidence" value="ECO:0007669"/>
    <property type="project" value="EnsemblMetazoa"/>
</dbReference>
<dbReference type="GO" id="GO:0043035">
    <property type="term" value="F:chromatin insulator sequence binding"/>
    <property type="evidence" value="ECO:0000250"/>
    <property type="project" value="UniProtKB"/>
</dbReference>
<dbReference type="GO" id="GO:0001094">
    <property type="term" value="F:TFIID-class transcription factor complex binding"/>
    <property type="evidence" value="ECO:0007669"/>
    <property type="project" value="EnsemblMetazoa"/>
</dbReference>
<dbReference type="GO" id="GO:0003713">
    <property type="term" value="F:transcription coactivator activity"/>
    <property type="evidence" value="ECO:0007669"/>
    <property type="project" value="UniProtKB-UniRule"/>
</dbReference>
<dbReference type="GO" id="GO:0033696">
    <property type="term" value="P:heterochromatin boundary formation"/>
    <property type="evidence" value="ECO:0007669"/>
    <property type="project" value="EnsemblMetazoa"/>
</dbReference>
<dbReference type="GO" id="GO:0006406">
    <property type="term" value="P:mRNA export from nucleus"/>
    <property type="evidence" value="ECO:0000250"/>
    <property type="project" value="UniProtKB"/>
</dbReference>
<dbReference type="GO" id="GO:0016973">
    <property type="term" value="P:poly(A)+ mRNA export from nucleus"/>
    <property type="evidence" value="ECO:0007669"/>
    <property type="project" value="EnsemblMetazoa"/>
</dbReference>
<dbReference type="GO" id="GO:0045944">
    <property type="term" value="P:positive regulation of transcription by RNA polymerase II"/>
    <property type="evidence" value="ECO:0000250"/>
    <property type="project" value="UniProtKB"/>
</dbReference>
<dbReference type="GO" id="GO:0015031">
    <property type="term" value="P:protein transport"/>
    <property type="evidence" value="ECO:0007669"/>
    <property type="project" value="UniProtKB-KW"/>
</dbReference>
<dbReference type="GO" id="GO:0006368">
    <property type="term" value="P:transcription elongation by RNA polymerase II"/>
    <property type="evidence" value="ECO:0007669"/>
    <property type="project" value="UniProtKB-UniRule"/>
</dbReference>
<dbReference type="FunFam" id="1.10.246.140:FF:000002">
    <property type="entry name" value="Enhancer of yellow 2 transcription factor"/>
    <property type="match status" value="1"/>
</dbReference>
<dbReference type="Gene3D" id="1.10.246.140">
    <property type="match status" value="1"/>
</dbReference>
<dbReference type="HAMAP" id="MF_03046">
    <property type="entry name" value="ENY2_Sus1"/>
    <property type="match status" value="1"/>
</dbReference>
<dbReference type="InterPro" id="IPR018783">
    <property type="entry name" value="TF_ENY2"/>
</dbReference>
<dbReference type="InterPro" id="IPR038212">
    <property type="entry name" value="TF_EnY2_sf"/>
</dbReference>
<dbReference type="PANTHER" id="PTHR12514">
    <property type="entry name" value="ENHANCER OF YELLOW 2 TRANSCRIPTION FACTOR"/>
    <property type="match status" value="1"/>
</dbReference>
<dbReference type="Pfam" id="PF10163">
    <property type="entry name" value="EnY2"/>
    <property type="match status" value="1"/>
</dbReference>
<protein>
    <recommendedName>
        <fullName evidence="2">Enhancer of yellow 2 transcription factor</fullName>
    </recommendedName>
</protein>
<keyword id="KW-0010">Activator</keyword>
<keyword id="KW-0156">Chromatin regulator</keyword>
<keyword id="KW-0963">Cytoplasm</keyword>
<keyword id="KW-0509">mRNA transport</keyword>
<keyword id="KW-0539">Nucleus</keyword>
<keyword id="KW-0653">Protein transport</keyword>
<keyword id="KW-0804">Transcription</keyword>
<keyword id="KW-0805">Transcription regulation</keyword>
<keyword id="KW-0811">Translocation</keyword>
<keyword id="KW-0813">Transport</keyword>
<proteinExistence type="inferred from homology"/>
<sequence>MSVSAAVDQYTVLTGDRSKIKDLLCSRLTECGWRDEVRLMCRNILLEKGTNNSFTVEQLITEVTPKARTLVPDAIKKELLMKIRTILTENEEEADEPEDES</sequence>
<evidence type="ECO:0000250" key="1"/>
<evidence type="ECO:0000255" key="2">
    <source>
        <dbReference type="HAMAP-Rule" id="MF_03046"/>
    </source>
</evidence>
<name>ENY2_DROER</name>
<organism>
    <name type="scientific">Drosophila erecta</name>
    <name type="common">Fruit fly</name>
    <dbReference type="NCBI Taxonomy" id="7220"/>
    <lineage>
        <taxon>Eukaryota</taxon>
        <taxon>Metazoa</taxon>
        <taxon>Ecdysozoa</taxon>
        <taxon>Arthropoda</taxon>
        <taxon>Hexapoda</taxon>
        <taxon>Insecta</taxon>
        <taxon>Pterygota</taxon>
        <taxon>Neoptera</taxon>
        <taxon>Endopterygota</taxon>
        <taxon>Diptera</taxon>
        <taxon>Brachycera</taxon>
        <taxon>Muscomorpha</taxon>
        <taxon>Ephydroidea</taxon>
        <taxon>Drosophilidae</taxon>
        <taxon>Drosophila</taxon>
        <taxon>Sophophora</taxon>
    </lineage>
</organism>
<comment type="function">
    <text evidence="1">Involved in mRNA export coupled transcription activation by association with both the AMEX and the SAGA complexes. The SAGA complex is a multiprotein complex that activates transcription by remodeling chromatin and mediating histone acetylation and deubiquitination. Within the SAGA complex, participates in a subcomplex that specifically deubiquitinates histone H2B. The SAGA complex is recruited to specific gene promoters by activators, where it is required for transcription. Required for nuclear receptor-mediated transactivation. Involved in transcription elongation by recruiting the THO complex onto nascent mRNA. The AMEX complex functions in docking export-competent ribonucleoprotein particles (mRNPs) to the nuclear entrance of the nuclear pore complex (nuclear basket). AMEX participates in mRNA export and accurate chromatin positioning in the nucleus by tethering genes to the nuclear periphery (By similarity).</text>
</comment>
<comment type="subunit">
    <text evidence="2">Component of the nuclear pore complex (NPC)-associated AMEX complex (anchoring and mRNA export complex), composed of at least e(y)2 and xmas-2. Component of the SAGA transcription coactivator-HAT complexes, at least composed of Ada2b, e(y)2, Pcaf/Gcn5, Taf10 and Nipped-A/Trrap. Within the SAGA complex, e(y)2, Sgf11, and not/nonstop form an additional subcomplex of SAGA called the DUB module (deubiquitination module). Component of the THO complex, composed of at least e(y)2, HPR1, THO2, THOC5, THOC6 and THOC7. Interacts with e(y)1. Interacts with su(Hw) (via zinc fingers). Interacts with xmas-2; required for localization to the nuclear periphery. Interacts with the nuclear pore complex (NPC).</text>
</comment>
<comment type="subcellular location">
    <subcellularLocation>
        <location evidence="2">Nucleus</location>
        <location evidence="2">Nucleoplasm</location>
    </subcellularLocation>
    <subcellularLocation>
        <location evidence="2">Cytoplasm</location>
    </subcellularLocation>
</comment>
<comment type="similarity">
    <text evidence="2">Belongs to the ENY2 family.</text>
</comment>
<feature type="chain" id="PRO_0000367554" description="Enhancer of yellow 2 transcription factor">
    <location>
        <begin position="1"/>
        <end position="101"/>
    </location>
</feature>
<gene>
    <name evidence="2" type="primary">e(y)2</name>
    <name type="ORF">GG18848</name>
</gene>
<accession>B3NUB6</accession>
<reference key="1">
    <citation type="journal article" date="2007" name="Nature">
        <title>Evolution of genes and genomes on the Drosophila phylogeny.</title>
        <authorList>
            <consortium name="Drosophila 12 genomes consortium"/>
        </authorList>
    </citation>
    <scope>NUCLEOTIDE SEQUENCE [LARGE SCALE GENOMIC DNA]</scope>
    <source>
        <strain>Tucson 14021-0224.01</strain>
    </source>
</reference>